<reference key="1">
    <citation type="journal article" date="2011" name="Plant Mol. Biol.">
        <title>RNA-seq discovery, functional characterization, and comparison of sesquiterpene synthases from Solanum lycopersicum and Solanum habrochaites trichomes.</title>
        <authorList>
            <person name="Bleeker P.M."/>
            <person name="Spyropoulou E.A."/>
            <person name="Diergaarde P.J."/>
            <person name="Volpin H."/>
            <person name="De Both M.T.J."/>
            <person name="Zerbe P."/>
            <person name="Bohlmann J."/>
            <person name="Falara V."/>
            <person name="Matsuba Y."/>
            <person name="Pichersky E."/>
            <person name="Haring M.A."/>
            <person name="Schuurink R.C."/>
        </authorList>
    </citation>
    <scope>NUCLEOTIDE SEQUENCE [MRNA]</scope>
    <scope>FUNCTION</scope>
    <scope>CATALYTIC ACTIVITY</scope>
    <scope>PATHWAY</scope>
    <scope>GENE FAMILY</scope>
    <source>
        <strain>cv. PI126449</strain>
    </source>
</reference>
<comment type="function">
    <text evidence="3">Sesquiterpene synthase involved in the biosynthesis of volatile compounds (PubMed:21818683). Mediates the conversion of (2E,6E)-farnesyl diphosphate (FPP) into germacrene A (PubMed:21818683).</text>
</comment>
<comment type="catalytic activity">
    <reaction evidence="3">
        <text>(2E,6E)-farnesyl diphosphate = germacrene A + diphosphate</text>
        <dbReference type="Rhea" id="RHEA:25452"/>
        <dbReference type="ChEBI" id="CHEBI:33019"/>
        <dbReference type="ChEBI" id="CHEBI:36517"/>
        <dbReference type="ChEBI" id="CHEBI:175763"/>
    </reaction>
    <physiologicalReaction direction="left-to-right" evidence="3">
        <dbReference type="Rhea" id="RHEA:25453"/>
    </physiologicalReaction>
</comment>
<comment type="cofactor">
    <cofactor evidence="1">
        <name>Mg(2+)</name>
        <dbReference type="ChEBI" id="CHEBI:18420"/>
    </cofactor>
    <cofactor evidence="1">
        <name>Mn(2+)</name>
        <dbReference type="ChEBI" id="CHEBI:29035"/>
    </cofactor>
    <text evidence="1">Binds 3 Mg(2+) or Mn(2+) ions per subunit.</text>
</comment>
<comment type="pathway">
    <text evidence="3">Secondary metabolite biosynthesis; terpenoid biosynthesis.</text>
</comment>
<comment type="domain">
    <text evidence="2">The Asp-Asp-Xaa-Xaa-Asp/Glu (DDXXD/E) motif is important for the catalytic activity, presumably through binding to Mg(2+).</text>
</comment>
<comment type="similarity">
    <text evidence="5">Belongs to the terpene synthase family. Tpsa subfamily.</text>
</comment>
<gene>
    <name evidence="4" type="primary">TPS15b</name>
</gene>
<dbReference type="EC" id="4.2.3.-" evidence="3"/>
<dbReference type="EMBL" id="JN402393">
    <property type="protein sequence ID" value="AEM23830.1"/>
    <property type="molecule type" value="mRNA"/>
</dbReference>
<dbReference type="SMR" id="G8H5N2"/>
<dbReference type="UniPathway" id="UPA00213"/>
<dbReference type="GO" id="GO:0000287">
    <property type="term" value="F:magnesium ion binding"/>
    <property type="evidence" value="ECO:0007669"/>
    <property type="project" value="InterPro"/>
</dbReference>
<dbReference type="GO" id="GO:0010333">
    <property type="term" value="F:terpene synthase activity"/>
    <property type="evidence" value="ECO:0007669"/>
    <property type="project" value="InterPro"/>
</dbReference>
<dbReference type="GO" id="GO:0016102">
    <property type="term" value="P:diterpenoid biosynthetic process"/>
    <property type="evidence" value="ECO:0007669"/>
    <property type="project" value="InterPro"/>
</dbReference>
<dbReference type="CDD" id="cd00684">
    <property type="entry name" value="Terpene_cyclase_plant_C1"/>
    <property type="match status" value="1"/>
</dbReference>
<dbReference type="FunFam" id="1.10.600.10:FF:000007">
    <property type="entry name" value="Isoprene synthase, chloroplastic"/>
    <property type="match status" value="1"/>
</dbReference>
<dbReference type="FunFam" id="1.50.10.130:FF:000001">
    <property type="entry name" value="Isoprene synthase, chloroplastic"/>
    <property type="match status" value="1"/>
</dbReference>
<dbReference type="Gene3D" id="1.10.600.10">
    <property type="entry name" value="Farnesyl Diphosphate Synthase"/>
    <property type="match status" value="1"/>
</dbReference>
<dbReference type="Gene3D" id="1.50.10.130">
    <property type="entry name" value="Terpene synthase, N-terminal domain"/>
    <property type="match status" value="1"/>
</dbReference>
<dbReference type="InterPro" id="IPR008949">
    <property type="entry name" value="Isoprenoid_synthase_dom_sf"/>
</dbReference>
<dbReference type="InterPro" id="IPR034741">
    <property type="entry name" value="Terpene_cyclase-like_1_C"/>
</dbReference>
<dbReference type="InterPro" id="IPR044814">
    <property type="entry name" value="Terpene_cyclase_plant_C1"/>
</dbReference>
<dbReference type="InterPro" id="IPR001906">
    <property type="entry name" value="Terpene_synth_N"/>
</dbReference>
<dbReference type="InterPro" id="IPR036965">
    <property type="entry name" value="Terpene_synth_N_sf"/>
</dbReference>
<dbReference type="InterPro" id="IPR050148">
    <property type="entry name" value="Terpene_synthase-like"/>
</dbReference>
<dbReference type="InterPro" id="IPR005630">
    <property type="entry name" value="Terpene_synthase_metal-bd"/>
</dbReference>
<dbReference type="InterPro" id="IPR008930">
    <property type="entry name" value="Terpenoid_cyclase/PrenylTrfase"/>
</dbReference>
<dbReference type="PANTHER" id="PTHR31225">
    <property type="entry name" value="OS04G0344100 PROTEIN-RELATED"/>
    <property type="match status" value="1"/>
</dbReference>
<dbReference type="PANTHER" id="PTHR31225:SF76">
    <property type="entry name" value="SESQUITERPENE SYNTHASE 15"/>
    <property type="match status" value="1"/>
</dbReference>
<dbReference type="Pfam" id="PF01397">
    <property type="entry name" value="Terpene_synth"/>
    <property type="match status" value="1"/>
</dbReference>
<dbReference type="Pfam" id="PF03936">
    <property type="entry name" value="Terpene_synth_C"/>
    <property type="match status" value="1"/>
</dbReference>
<dbReference type="SFLD" id="SFLDS00005">
    <property type="entry name" value="Isoprenoid_Synthase_Type_I"/>
    <property type="match status" value="1"/>
</dbReference>
<dbReference type="SFLD" id="SFLDG01019">
    <property type="entry name" value="Terpene_Cyclase_Like_1_C_Termi"/>
    <property type="match status" value="1"/>
</dbReference>
<dbReference type="SUPFAM" id="SSF48239">
    <property type="entry name" value="Terpenoid cyclases/Protein prenyltransferases"/>
    <property type="match status" value="1"/>
</dbReference>
<dbReference type="SUPFAM" id="SSF48576">
    <property type="entry name" value="Terpenoid synthases"/>
    <property type="match status" value="1"/>
</dbReference>
<feature type="chain" id="PRO_0000454687" description="Sesquiterpene synthase 15b">
    <location>
        <begin position="1"/>
        <end position="540"/>
    </location>
</feature>
<feature type="short sequence motif" description="DDXXD motif" evidence="1">
    <location>
        <begin position="292"/>
        <end position="296"/>
    </location>
</feature>
<feature type="binding site" evidence="2">
    <location>
        <position position="292"/>
    </location>
    <ligand>
        <name>Mg(2+)</name>
        <dbReference type="ChEBI" id="CHEBI:18420"/>
        <label>1</label>
    </ligand>
</feature>
<feature type="binding site" evidence="2">
    <location>
        <position position="292"/>
    </location>
    <ligand>
        <name>Mg(2+)</name>
        <dbReference type="ChEBI" id="CHEBI:18420"/>
        <label>2</label>
    </ligand>
</feature>
<feature type="binding site" evidence="2">
    <location>
        <position position="296"/>
    </location>
    <ligand>
        <name>Mg(2+)</name>
        <dbReference type="ChEBI" id="CHEBI:18420"/>
        <label>1</label>
    </ligand>
</feature>
<feature type="binding site" evidence="2">
    <location>
        <position position="296"/>
    </location>
    <ligand>
        <name>Mg(2+)</name>
        <dbReference type="ChEBI" id="CHEBI:18420"/>
        <label>2</label>
    </ligand>
</feature>
<feature type="binding site" evidence="2">
    <location>
        <position position="445"/>
    </location>
    <ligand>
        <name>Mg(2+)</name>
        <dbReference type="ChEBI" id="CHEBI:18420"/>
        <label>3</label>
    </ligand>
</feature>
<name>TS15B_SOLHA</name>
<proteinExistence type="evidence at protein level"/>
<evidence type="ECO:0000250" key="1">
    <source>
        <dbReference type="UniProtKB" id="A0A1C9J6A7"/>
    </source>
</evidence>
<evidence type="ECO:0000250" key="2">
    <source>
        <dbReference type="UniProtKB" id="Q40577"/>
    </source>
</evidence>
<evidence type="ECO:0000269" key="3">
    <source>
    </source>
</evidence>
<evidence type="ECO:0000303" key="4">
    <source>
    </source>
</evidence>
<evidence type="ECO:0000305" key="5"/>
<keyword id="KW-0456">Lyase</keyword>
<keyword id="KW-0460">Magnesium</keyword>
<keyword id="KW-0479">Metal-binding</keyword>
<protein>
    <recommendedName>
        <fullName evidence="4">Sesquiterpene synthase 15b</fullName>
        <shortName evidence="4">ShTPS15b</shortName>
    </recommendedName>
    <alternativeName>
        <fullName evidence="4">Germacrene A synthase TPS15b</fullName>
        <ecNumber evidence="3">4.2.3.-</ecNumber>
    </alternativeName>
</protein>
<organism>
    <name type="scientific">Solanum habrochaites</name>
    <name type="common">Wild tomato</name>
    <name type="synonym">Lycopersicon hirsutum</name>
    <dbReference type="NCBI Taxonomy" id="62890"/>
    <lineage>
        <taxon>Eukaryota</taxon>
        <taxon>Viridiplantae</taxon>
        <taxon>Streptophyta</taxon>
        <taxon>Embryophyta</taxon>
        <taxon>Tracheophyta</taxon>
        <taxon>Spermatophyta</taxon>
        <taxon>Magnoliopsida</taxon>
        <taxon>eudicotyledons</taxon>
        <taxon>Gunneridae</taxon>
        <taxon>Pentapetalae</taxon>
        <taxon>asterids</taxon>
        <taxon>lamiids</taxon>
        <taxon>Solanales</taxon>
        <taxon>Solanaceae</taxon>
        <taxon>Solanoideae</taxon>
        <taxon>Solaneae</taxon>
        <taxon>Solanum</taxon>
        <taxon>Solanum subgen. Lycopersicon</taxon>
    </lineage>
</organism>
<sequence>MRRSDNHHPTVWGDHFLAYANLSGANEWEEKEHEDQKGEVRKMLVLSPSKSLQKLELINTIQLLGVSYHFEHEIEESLSEIYNGYEEWIGKSHDLHVVALSFRLLRQQGYYVSSDVFRKFTDDQGNYNKALVNDTHGLLSLYEAAQFRVHDEEILDEAINFTTTHLNLLLPKLSNSLSMQVSYALKYPINKTMARAATRKYISFYQEEKSSCDQLLINFAKLDFNILQKMYKREMCDITRWWKELDLVNELGFARDRVVELYFWSLGVYFEPQYKVARNILTKVLCFVSITDDIYDTYGTLHELTLLTNAIERRNIDAIENLTSYMKLFYTALLHFYDEVEKELEKENKSFRVNFAISEMKKLVRAYFQEAKWYHGNTVPKMEEEYMKNGIQSSASPTLATASWLGMGDEATKEAFEWISTEPPILVASSNIARLLNDIVSHEREIERGDVASSIECYMKEYGATKEEAYMEIRKIIENNWKDLNRGCLKPTTVPRVLLMPVLNLTRVAEFVYKDEDAYTFSKNNLKDVIFMVLDDPIEE</sequence>
<accession>G8H5N2</accession>